<comment type="catalytic activity">
    <reaction>
        <text>(1,4-alpha-D-galacturonosyl)n+m + H2O = (1,4-alpha-D-galacturonosyl)n + (1,4-alpha-D-galacturonosyl)m.</text>
        <dbReference type="EC" id="3.2.1.15"/>
    </reaction>
</comment>
<comment type="subcellular location">
    <subcellularLocation>
        <location evidence="4">Secreted</location>
    </subcellularLocation>
    <subcellularLocation>
        <location evidence="4">Secreted</location>
        <location evidence="4">Cell wall</location>
    </subcellularLocation>
</comment>
<comment type="tissue specificity">
    <text evidence="3">Expressed in larval carcasses and gut, and adult gut.</text>
</comment>
<comment type="developmental stage">
    <text evidence="3">Eggs, larvae and adult.</text>
</comment>
<comment type="similarity">
    <text evidence="2">Belongs to the glycosyl hydrolase 28 family.</text>
</comment>
<dbReference type="EC" id="3.2.1.15"/>
<dbReference type="EMBL" id="Y17906">
    <property type="protein sequence ID" value="CAA76930.1"/>
    <property type="molecule type" value="mRNA"/>
</dbReference>
<dbReference type="SMR" id="O97400"/>
<dbReference type="CAZy" id="GH28">
    <property type="family name" value="Glycoside Hydrolase Family 28"/>
</dbReference>
<dbReference type="OrthoDB" id="1546079at2759"/>
<dbReference type="GO" id="GO:0005576">
    <property type="term" value="C:extracellular region"/>
    <property type="evidence" value="ECO:0007669"/>
    <property type="project" value="UniProtKB-SubCell"/>
</dbReference>
<dbReference type="GO" id="GO:0004650">
    <property type="term" value="F:polygalacturonase activity"/>
    <property type="evidence" value="ECO:0007669"/>
    <property type="project" value="UniProtKB-EC"/>
</dbReference>
<dbReference type="GO" id="GO:0071555">
    <property type="term" value="P:cell wall organization"/>
    <property type="evidence" value="ECO:0007669"/>
    <property type="project" value="UniProtKB-KW"/>
</dbReference>
<dbReference type="GO" id="GO:0007586">
    <property type="term" value="P:digestion"/>
    <property type="evidence" value="ECO:0007669"/>
    <property type="project" value="UniProtKB-KW"/>
</dbReference>
<dbReference type="GO" id="GO:0045490">
    <property type="term" value="P:pectin catabolic process"/>
    <property type="evidence" value="ECO:0007669"/>
    <property type="project" value="TreeGrafter"/>
</dbReference>
<dbReference type="FunFam" id="2.160.20.10:FF:000002">
    <property type="entry name" value="Endopolygalacturonase D"/>
    <property type="match status" value="1"/>
</dbReference>
<dbReference type="Gene3D" id="2.160.20.10">
    <property type="entry name" value="Single-stranded right-handed beta-helix, Pectin lyase-like"/>
    <property type="match status" value="1"/>
</dbReference>
<dbReference type="InterPro" id="IPR000743">
    <property type="entry name" value="Glyco_hydro_28"/>
</dbReference>
<dbReference type="InterPro" id="IPR050434">
    <property type="entry name" value="Glycosyl_hydrlase_28"/>
</dbReference>
<dbReference type="InterPro" id="IPR006626">
    <property type="entry name" value="PbH1"/>
</dbReference>
<dbReference type="InterPro" id="IPR012334">
    <property type="entry name" value="Pectin_lyas_fold"/>
</dbReference>
<dbReference type="InterPro" id="IPR011050">
    <property type="entry name" value="Pectin_lyase_fold/virulence"/>
</dbReference>
<dbReference type="PANTHER" id="PTHR31884:SF9">
    <property type="entry name" value="ENDOPOLYGALACTURONASE D-RELATED"/>
    <property type="match status" value="1"/>
</dbReference>
<dbReference type="PANTHER" id="PTHR31884">
    <property type="entry name" value="POLYGALACTURONASE"/>
    <property type="match status" value="1"/>
</dbReference>
<dbReference type="Pfam" id="PF00295">
    <property type="entry name" value="Glyco_hydro_28"/>
    <property type="match status" value="1"/>
</dbReference>
<dbReference type="SMART" id="SM00710">
    <property type="entry name" value="PbH1"/>
    <property type="match status" value="2"/>
</dbReference>
<dbReference type="SUPFAM" id="SSF51126">
    <property type="entry name" value="Pectin lyase-like"/>
    <property type="match status" value="1"/>
</dbReference>
<name>PGLR_PHACE</name>
<organism>
    <name type="scientific">Phaedon cochleariae</name>
    <name type="common">Mustard beetle</name>
    <dbReference type="NCBI Taxonomy" id="80249"/>
    <lineage>
        <taxon>Eukaryota</taxon>
        <taxon>Metazoa</taxon>
        <taxon>Ecdysozoa</taxon>
        <taxon>Arthropoda</taxon>
        <taxon>Hexapoda</taxon>
        <taxon>Insecta</taxon>
        <taxon>Pterygota</taxon>
        <taxon>Neoptera</taxon>
        <taxon>Endopterygota</taxon>
        <taxon>Coleoptera</taxon>
        <taxon>Polyphaga</taxon>
        <taxon>Cucujiformia</taxon>
        <taxon>Chrysomeloidea</taxon>
        <taxon>Chrysomelidae</taxon>
        <taxon>Chrysomelinae</taxon>
        <taxon>Chrysomelini</taxon>
        <taxon>Phaedon</taxon>
    </lineage>
</organism>
<reference evidence="4 5" key="1">
    <citation type="journal article" date="1999" name="Insect Biochem. Mol. Biol.">
        <title>Molecular cloning of cDNAs encoding a range of digestive enzymes from a phytophagous beetle, Phaedon cochleariae.</title>
        <authorList>
            <person name="Girard C."/>
            <person name="Jouanin L."/>
        </authorList>
    </citation>
    <scope>NUCLEOTIDE SEQUENCE [MRNA]</scope>
    <scope>TISSUE SPECIFICITY</scope>
    <scope>DEVELOPMENTAL STAGE</scope>
    <source>
        <tissue evidence="3">Larval gut</tissue>
    </source>
</reference>
<protein>
    <recommendedName>
        <fullName>Polygalacturonase</fullName>
        <shortName>PG</shortName>
        <ecNumber>3.2.1.15</ecNumber>
    </recommendedName>
    <alternativeName>
        <fullName>Pectinase</fullName>
    </alternativeName>
</protein>
<keyword id="KW-0134">Cell wall</keyword>
<keyword id="KW-0961">Cell wall biogenesis/degradation</keyword>
<keyword id="KW-0165">Cleavage on pair of basic residues</keyword>
<keyword id="KW-0222">Digestion</keyword>
<keyword id="KW-1015">Disulfide bond</keyword>
<keyword id="KW-0325">Glycoprotein</keyword>
<keyword id="KW-0326">Glycosidase</keyword>
<keyword id="KW-0378">Hydrolase</keyword>
<keyword id="KW-0677">Repeat</keyword>
<keyword id="KW-0964">Secreted</keyword>
<keyword id="KW-0732">Signal</keyword>
<keyword id="KW-0865">Zymogen</keyword>
<accession>O97400</accession>
<accession>P81523</accession>
<feature type="signal peptide" evidence="2">
    <location>
        <begin position="1"/>
        <end position="19"/>
    </location>
</feature>
<feature type="propeptide" id="PRO_0000316163" evidence="2">
    <location>
        <begin position="20"/>
        <end status="unknown"/>
    </location>
</feature>
<feature type="chain" id="PRO_5000147328" description="Polygalacturonase" evidence="2">
    <location>
        <begin status="unknown"/>
        <end position="367"/>
    </location>
</feature>
<feature type="repeat" description="PbH1 1" evidence="2">
    <location>
        <begin position="187"/>
        <end position="208"/>
    </location>
</feature>
<feature type="repeat" description="PbH1 2" evidence="2">
    <location>
        <begin position="240"/>
        <end position="261"/>
    </location>
</feature>
<feature type="active site" description="Proton donor" evidence="1">
    <location>
        <position position="201"/>
    </location>
</feature>
<feature type="active site" evidence="1">
    <location>
        <position position="223"/>
    </location>
</feature>
<feature type="glycosylation site" description="N-linked (GlcNAc...) asparagine" evidence="2">
    <location>
        <position position="185"/>
    </location>
</feature>
<feature type="glycosylation site" description="N-linked (GlcNAc...) asparagine" evidence="2">
    <location>
        <position position="242"/>
    </location>
</feature>
<feature type="glycosylation site" description="N-linked (GlcNAc...) asparagine" evidence="2">
    <location>
        <position position="343"/>
    </location>
</feature>
<feature type="glycosylation site" description="N-linked (GlcNAc...) asparagine" evidence="2">
    <location>
        <position position="357"/>
    </location>
</feature>
<feature type="disulfide bond" evidence="1">
    <location>
        <begin position="27"/>
        <end position="42"/>
    </location>
</feature>
<feature type="disulfide bond" evidence="1">
    <location>
        <begin position="203"/>
        <end position="219"/>
    </location>
</feature>
<feature type="disulfide bond" evidence="1">
    <location>
        <begin position="334"/>
        <end position="339"/>
    </location>
</feature>
<feature type="disulfide bond" evidence="1">
    <location>
        <begin position="358"/>
        <end position="367"/>
    </location>
</feature>
<sequence length="367" mass="39426">MSIRLIAVLSAASIAVTSATPVADSSCTISSFDQVASVLAECTDIVVSNLEVPAGETLNLETKKKGVTITFEGKTTFAYKEWTGPLLRVKGKAITVVGAKGSVLDGQGQLYWDGKGGNGGIKKPKFFKIKATEGSHFKNINLLNCPVQVHSIDHSGPLTLSGWNIDVSQGDKDALGHNTDGFDINTTDQLTIEDTVVKNQDDCIAVNQGTNFLFNNLDCSGGHGLSLSVGTSHEIIKNTVRNVTFSNSVVRKSRNGIHIKTTYQFRGRYPWRMLTYSNIAMEGIWKYAVNVEQDYKKGKPTGIPVGNIPIKGLHLEKVTGTLTGEESTPVYIICADGACSNFNWSGVSFEGASHASNCSYVPTGYSC</sequence>
<proteinExistence type="evidence at transcript level"/>
<evidence type="ECO:0000250" key="1">
    <source>
        <dbReference type="UniProtKB" id="O74213"/>
    </source>
</evidence>
<evidence type="ECO:0000255" key="2"/>
<evidence type="ECO:0000269" key="3">
    <source>
    </source>
</evidence>
<evidence type="ECO:0000305" key="4"/>
<evidence type="ECO:0000312" key="5">
    <source>
        <dbReference type="EMBL" id="CAA76930.1"/>
    </source>
</evidence>